<feature type="signal peptide" evidence="2">
    <location>
        <begin position="1"/>
        <end position="22"/>
    </location>
</feature>
<feature type="chain" id="PRO_0000032833" description="Superoxide dismutase [Cu-Zn]">
    <location>
        <begin position="23"/>
        <end position="186"/>
    </location>
</feature>
<feature type="binding site" evidence="1">
    <location>
        <position position="79"/>
    </location>
    <ligand>
        <name>Cu cation</name>
        <dbReference type="ChEBI" id="CHEBI:23378"/>
        <note>catalytic</note>
    </ligand>
</feature>
<feature type="binding site" evidence="1">
    <location>
        <position position="81"/>
    </location>
    <ligand>
        <name>Cu cation</name>
        <dbReference type="ChEBI" id="CHEBI:23378"/>
        <note>catalytic</note>
    </ligand>
</feature>
<feature type="binding site" evidence="1">
    <location>
        <position position="104"/>
    </location>
    <ligand>
        <name>Cu cation</name>
        <dbReference type="ChEBI" id="CHEBI:23378"/>
        <note>catalytic</note>
    </ligand>
</feature>
<feature type="binding site" evidence="1">
    <location>
        <position position="104"/>
    </location>
    <ligand>
        <name>Zn(2+)</name>
        <dbReference type="ChEBI" id="CHEBI:29105"/>
        <note>structural</note>
    </ligand>
</feature>
<feature type="binding site" evidence="1">
    <location>
        <position position="113"/>
    </location>
    <ligand>
        <name>Zn(2+)</name>
        <dbReference type="ChEBI" id="CHEBI:29105"/>
        <note>structural</note>
    </ligand>
</feature>
<feature type="binding site" evidence="1">
    <location>
        <position position="122"/>
    </location>
    <ligand>
        <name>Zn(2+)</name>
        <dbReference type="ChEBI" id="CHEBI:29105"/>
        <note>structural</note>
    </ligand>
</feature>
<feature type="binding site" evidence="1">
    <location>
        <position position="125"/>
    </location>
    <ligand>
        <name>Zn(2+)</name>
        <dbReference type="ChEBI" id="CHEBI:29105"/>
        <note>structural</note>
    </ligand>
</feature>
<feature type="binding site" evidence="1">
    <location>
        <position position="160"/>
    </location>
    <ligand>
        <name>Cu cation</name>
        <dbReference type="ChEBI" id="CHEBI:23378"/>
        <note>catalytic</note>
    </ligand>
</feature>
<feature type="disulfide bond" evidence="1">
    <location>
        <begin position="86"/>
        <end position="182"/>
    </location>
</feature>
<feature type="strand" evidence="4">
    <location>
        <begin position="33"/>
        <end position="40"/>
    </location>
</feature>
<feature type="turn" evidence="4">
    <location>
        <begin position="43"/>
        <end position="45"/>
    </location>
</feature>
<feature type="strand" evidence="4">
    <location>
        <begin position="48"/>
        <end position="58"/>
    </location>
</feature>
<feature type="strand" evidence="4">
    <location>
        <begin position="61"/>
        <end position="68"/>
    </location>
</feature>
<feature type="strand" evidence="4">
    <location>
        <begin position="73"/>
        <end position="76"/>
    </location>
</feature>
<feature type="strand" evidence="4">
    <location>
        <begin position="78"/>
        <end position="84"/>
    </location>
</feature>
<feature type="strand" evidence="4">
    <location>
        <begin position="89"/>
        <end position="91"/>
    </location>
</feature>
<feature type="strand" evidence="4">
    <location>
        <begin position="94"/>
        <end position="96"/>
    </location>
</feature>
<feature type="helix" evidence="4">
    <location>
        <begin position="99"/>
        <end position="101"/>
    </location>
</feature>
<feature type="strand" evidence="4">
    <location>
        <begin position="129"/>
        <end position="131"/>
    </location>
</feature>
<feature type="strand" evidence="4">
    <location>
        <begin position="141"/>
        <end position="143"/>
    </location>
</feature>
<feature type="helix" evidence="4">
    <location>
        <begin position="149"/>
        <end position="152"/>
    </location>
</feature>
<feature type="strand" evidence="4">
    <location>
        <begin position="155"/>
        <end position="162"/>
    </location>
</feature>
<feature type="strand" evidence="4">
    <location>
        <begin position="166"/>
        <end position="171"/>
    </location>
</feature>
<feature type="helix" evidence="4">
    <location>
        <begin position="172"/>
        <end position="175"/>
    </location>
</feature>
<feature type="strand" evidence="4">
    <location>
        <begin position="178"/>
        <end position="185"/>
    </location>
</feature>
<keyword id="KW-0002">3D-structure</keyword>
<keyword id="KW-0049">Antioxidant</keyword>
<keyword id="KW-0186">Copper</keyword>
<keyword id="KW-1015">Disulfide bond</keyword>
<keyword id="KW-0479">Metal-binding</keyword>
<keyword id="KW-0560">Oxidoreductase</keyword>
<keyword id="KW-0574">Periplasm</keyword>
<keyword id="KW-0732">Signal</keyword>
<keyword id="KW-0862">Zinc</keyword>
<gene>
    <name type="primary">sodC</name>
    <name type="ordered locus">NMA1617</name>
</gene>
<dbReference type="EC" id="1.15.1.1"/>
<dbReference type="EMBL" id="AL157959">
    <property type="protein sequence ID" value="CAM08755.1"/>
    <property type="molecule type" value="Genomic_DNA"/>
</dbReference>
<dbReference type="PIR" id="E81855">
    <property type="entry name" value="E81855"/>
</dbReference>
<dbReference type="RefSeq" id="WP_002220801.1">
    <property type="nucleotide sequence ID" value="NC_003116.1"/>
</dbReference>
<dbReference type="PDB" id="2AQN">
    <property type="method" value="X-ray"/>
    <property type="resolution" value="1.40 A"/>
    <property type="chains" value="A/B/C=23-186"/>
</dbReference>
<dbReference type="PDB" id="2AQP">
    <property type="method" value="X-ray"/>
    <property type="resolution" value="1.30 A"/>
    <property type="chains" value="A/B=23-186"/>
</dbReference>
<dbReference type="PDB" id="2AQQ">
    <property type="method" value="X-ray"/>
    <property type="resolution" value="1.65 A"/>
    <property type="chains" value="A/B/C=23-186"/>
</dbReference>
<dbReference type="PDB" id="2AQT">
    <property type="method" value="X-ray"/>
    <property type="resolution" value="1.80 A"/>
    <property type="chains" value="A/B/C=23-186"/>
</dbReference>
<dbReference type="PDBsum" id="2AQN"/>
<dbReference type="PDBsum" id="2AQP"/>
<dbReference type="PDBsum" id="2AQQ"/>
<dbReference type="PDBsum" id="2AQT"/>
<dbReference type="SMR" id="P57005"/>
<dbReference type="EnsemblBacteria" id="CAM08755">
    <property type="protein sequence ID" value="CAM08755"/>
    <property type="gene ID" value="NMA1617"/>
</dbReference>
<dbReference type="GeneID" id="93387963"/>
<dbReference type="KEGG" id="nma:NMA1617"/>
<dbReference type="HOGENOM" id="CLU_056632_7_1_4"/>
<dbReference type="EvolutionaryTrace" id="P57005"/>
<dbReference type="Proteomes" id="UP000000626">
    <property type="component" value="Chromosome"/>
</dbReference>
<dbReference type="GO" id="GO:0042597">
    <property type="term" value="C:periplasmic space"/>
    <property type="evidence" value="ECO:0007669"/>
    <property type="project" value="UniProtKB-SubCell"/>
</dbReference>
<dbReference type="GO" id="GO:0005507">
    <property type="term" value="F:copper ion binding"/>
    <property type="evidence" value="ECO:0007669"/>
    <property type="project" value="InterPro"/>
</dbReference>
<dbReference type="GO" id="GO:0004784">
    <property type="term" value="F:superoxide dismutase activity"/>
    <property type="evidence" value="ECO:0007669"/>
    <property type="project" value="UniProtKB-EC"/>
</dbReference>
<dbReference type="CDD" id="cd00305">
    <property type="entry name" value="Cu-Zn_Superoxide_Dismutase"/>
    <property type="match status" value="1"/>
</dbReference>
<dbReference type="FunFam" id="2.60.40.200:FF:000002">
    <property type="entry name" value="Superoxide dismutase [Cu-Zn]"/>
    <property type="match status" value="1"/>
</dbReference>
<dbReference type="Gene3D" id="2.60.40.200">
    <property type="entry name" value="Superoxide dismutase, copper/zinc binding domain"/>
    <property type="match status" value="1"/>
</dbReference>
<dbReference type="InterPro" id="IPR036423">
    <property type="entry name" value="SOD-like_Cu/Zn_dom_sf"/>
</dbReference>
<dbReference type="InterPro" id="IPR024134">
    <property type="entry name" value="SOD_Cu/Zn_/chaperone"/>
</dbReference>
<dbReference type="InterPro" id="IPR018152">
    <property type="entry name" value="SOD_Cu/Zn_BS"/>
</dbReference>
<dbReference type="InterPro" id="IPR001424">
    <property type="entry name" value="SOD_Cu_Zn_dom"/>
</dbReference>
<dbReference type="NCBIfam" id="NF007628">
    <property type="entry name" value="PRK10290.1"/>
    <property type="match status" value="1"/>
</dbReference>
<dbReference type="PANTHER" id="PTHR10003">
    <property type="entry name" value="SUPEROXIDE DISMUTASE CU-ZN -RELATED"/>
    <property type="match status" value="1"/>
</dbReference>
<dbReference type="Pfam" id="PF00080">
    <property type="entry name" value="Sod_Cu"/>
    <property type="match status" value="1"/>
</dbReference>
<dbReference type="SUPFAM" id="SSF49329">
    <property type="entry name" value="Cu,Zn superoxide dismutase-like"/>
    <property type="match status" value="1"/>
</dbReference>
<dbReference type="PROSITE" id="PS00087">
    <property type="entry name" value="SOD_CU_ZN_1"/>
    <property type="match status" value="1"/>
</dbReference>
<dbReference type="PROSITE" id="PS00332">
    <property type="entry name" value="SOD_CU_ZN_2"/>
    <property type="match status" value="1"/>
</dbReference>
<comment type="function">
    <text evidence="1">Destroys radicals which are normally produced within the cells and which are toxic to biological systems.</text>
</comment>
<comment type="catalytic activity">
    <reaction>
        <text>2 superoxide + 2 H(+) = H2O2 + O2</text>
        <dbReference type="Rhea" id="RHEA:20696"/>
        <dbReference type="ChEBI" id="CHEBI:15378"/>
        <dbReference type="ChEBI" id="CHEBI:15379"/>
        <dbReference type="ChEBI" id="CHEBI:16240"/>
        <dbReference type="ChEBI" id="CHEBI:18421"/>
        <dbReference type="EC" id="1.15.1.1"/>
    </reaction>
</comment>
<comment type="cofactor">
    <cofactor evidence="1">
        <name>Cu cation</name>
        <dbReference type="ChEBI" id="CHEBI:23378"/>
    </cofactor>
    <text evidence="1">Binds 1 copper ion per subunit.</text>
</comment>
<comment type="cofactor">
    <cofactor evidence="1">
        <name>Zn(2+)</name>
        <dbReference type="ChEBI" id="CHEBI:29105"/>
    </cofactor>
    <text evidence="1">Binds 1 zinc ion per subunit.</text>
</comment>
<comment type="subunit">
    <text evidence="1">Homodimer.</text>
</comment>
<comment type="subcellular location">
    <subcellularLocation>
        <location evidence="1">Periplasm</location>
    </subcellularLocation>
</comment>
<comment type="similarity">
    <text evidence="3">Belongs to the Cu-Zn superoxide dismutase family.</text>
</comment>
<evidence type="ECO:0000250" key="1"/>
<evidence type="ECO:0000255" key="2"/>
<evidence type="ECO:0000305" key="3"/>
<evidence type="ECO:0007829" key="4">
    <source>
        <dbReference type="PDB" id="2AQP"/>
    </source>
</evidence>
<protein>
    <recommendedName>
        <fullName>Superoxide dismutase [Cu-Zn]</fullName>
        <ecNumber>1.15.1.1</ecNumber>
    </recommendedName>
</protein>
<sequence>MNMKTLLALAVSAVCSVSVAQAHEHNTIPKGASIEVKVQQLDPVNGNKDVGTVTITESNYGLVFTPDLQGLSEGLHGFHIHENPSCEPKEKEGKLTAGLGAGGHWDPKGAKQHGYPWQDDAHLGDLPALTVLHDGTATNPVLAPRLKHLDDVRGHSIMIHTGGDNHSDHPAPLGGGGPRMACGVIK</sequence>
<name>SODC_NEIMA</name>
<proteinExistence type="evidence at protein level"/>
<reference key="1">
    <citation type="journal article" date="2000" name="Nature">
        <title>Complete DNA sequence of a serogroup A strain of Neisseria meningitidis Z2491.</title>
        <authorList>
            <person name="Parkhill J."/>
            <person name="Achtman M."/>
            <person name="James K.D."/>
            <person name="Bentley S.D."/>
            <person name="Churcher C.M."/>
            <person name="Klee S.R."/>
            <person name="Morelli G."/>
            <person name="Basham D."/>
            <person name="Brown D."/>
            <person name="Chillingworth T."/>
            <person name="Davies R.M."/>
            <person name="Davis P."/>
            <person name="Devlin K."/>
            <person name="Feltwell T."/>
            <person name="Hamlin N."/>
            <person name="Holroyd S."/>
            <person name="Jagels K."/>
            <person name="Leather S."/>
            <person name="Moule S."/>
            <person name="Mungall K.L."/>
            <person name="Quail M.A."/>
            <person name="Rajandream M.A."/>
            <person name="Rutherford K.M."/>
            <person name="Simmonds M."/>
            <person name="Skelton J."/>
            <person name="Whitehead S."/>
            <person name="Spratt B.G."/>
            <person name="Barrell B.G."/>
        </authorList>
    </citation>
    <scope>NUCLEOTIDE SEQUENCE [LARGE SCALE GENOMIC DNA]</scope>
    <source>
        <strain>DSM 15465 / Z2491</strain>
    </source>
</reference>
<accession>P57005</accession>
<accession>A1ISJ6</accession>
<organism>
    <name type="scientific">Neisseria meningitidis serogroup A / serotype 4A (strain DSM 15465 / Z2491)</name>
    <dbReference type="NCBI Taxonomy" id="122587"/>
    <lineage>
        <taxon>Bacteria</taxon>
        <taxon>Pseudomonadati</taxon>
        <taxon>Pseudomonadota</taxon>
        <taxon>Betaproteobacteria</taxon>
        <taxon>Neisseriales</taxon>
        <taxon>Neisseriaceae</taxon>
        <taxon>Neisseria</taxon>
    </lineage>
</organism>